<gene>
    <name type="ordered locus">APJL_2017</name>
</gene>
<sequence length="220" mass="25014">MDNVVLMPREKLLASGAESLTDQELLAIFLRTGIKGMPVMQLSQEVLNGFGSLRELLSADLATFCRMKGLGQTQFIQLQASKEMTKRYLAQQMQVRENINEPYLAVMCFQAELESEEREVFMVMFLDNQNRLIKKEKMFYGTINQATVYPREIIKEALKCNAAAIIVAHNHPSGNCTPSESDRALTKKLEMACDLVGIRFVDHIVVGKGDYFSFEEEKFR</sequence>
<keyword id="KW-0378">Hydrolase</keyword>
<keyword id="KW-0479">Metal-binding</keyword>
<keyword id="KW-0482">Metalloprotease</keyword>
<keyword id="KW-0645">Protease</keyword>
<keyword id="KW-0862">Zinc</keyword>
<proteinExistence type="inferred from homology"/>
<comment type="similarity">
    <text evidence="2">Belongs to the UPF0758 family.</text>
</comment>
<dbReference type="EMBL" id="CP000687">
    <property type="protein sequence ID" value="ABY70562.1"/>
    <property type="molecule type" value="Genomic_DNA"/>
</dbReference>
<dbReference type="SMR" id="B0BTZ5"/>
<dbReference type="KEGG" id="apj:APJL_2017"/>
<dbReference type="HOGENOM" id="CLU_073529_0_1_6"/>
<dbReference type="Proteomes" id="UP000008547">
    <property type="component" value="Chromosome"/>
</dbReference>
<dbReference type="GO" id="GO:0046872">
    <property type="term" value="F:metal ion binding"/>
    <property type="evidence" value="ECO:0007669"/>
    <property type="project" value="UniProtKB-KW"/>
</dbReference>
<dbReference type="GO" id="GO:0008237">
    <property type="term" value="F:metallopeptidase activity"/>
    <property type="evidence" value="ECO:0007669"/>
    <property type="project" value="UniProtKB-KW"/>
</dbReference>
<dbReference type="GO" id="GO:0006508">
    <property type="term" value="P:proteolysis"/>
    <property type="evidence" value="ECO:0007669"/>
    <property type="project" value="UniProtKB-KW"/>
</dbReference>
<dbReference type="CDD" id="cd08071">
    <property type="entry name" value="MPN_DUF2466"/>
    <property type="match status" value="1"/>
</dbReference>
<dbReference type="Gene3D" id="3.40.140.10">
    <property type="entry name" value="Cytidine Deaminase, domain 2"/>
    <property type="match status" value="1"/>
</dbReference>
<dbReference type="InterPro" id="IPR037518">
    <property type="entry name" value="MPN"/>
</dbReference>
<dbReference type="InterPro" id="IPR025657">
    <property type="entry name" value="RadC_JAB"/>
</dbReference>
<dbReference type="InterPro" id="IPR010994">
    <property type="entry name" value="RuvA_2-like"/>
</dbReference>
<dbReference type="InterPro" id="IPR001405">
    <property type="entry name" value="UPF0758"/>
</dbReference>
<dbReference type="InterPro" id="IPR020891">
    <property type="entry name" value="UPF0758_CS"/>
</dbReference>
<dbReference type="InterPro" id="IPR046778">
    <property type="entry name" value="UPF0758_N"/>
</dbReference>
<dbReference type="NCBIfam" id="NF000642">
    <property type="entry name" value="PRK00024.1"/>
    <property type="match status" value="1"/>
</dbReference>
<dbReference type="NCBIfam" id="TIGR00608">
    <property type="entry name" value="radc"/>
    <property type="match status" value="1"/>
</dbReference>
<dbReference type="PANTHER" id="PTHR30471">
    <property type="entry name" value="DNA REPAIR PROTEIN RADC"/>
    <property type="match status" value="1"/>
</dbReference>
<dbReference type="PANTHER" id="PTHR30471:SF3">
    <property type="entry name" value="UPF0758 PROTEIN YEES-RELATED"/>
    <property type="match status" value="1"/>
</dbReference>
<dbReference type="Pfam" id="PF04002">
    <property type="entry name" value="RadC"/>
    <property type="match status" value="1"/>
</dbReference>
<dbReference type="Pfam" id="PF20582">
    <property type="entry name" value="UPF0758_N"/>
    <property type="match status" value="1"/>
</dbReference>
<dbReference type="SUPFAM" id="SSF102712">
    <property type="entry name" value="JAB1/MPN domain"/>
    <property type="match status" value="1"/>
</dbReference>
<dbReference type="SUPFAM" id="SSF47781">
    <property type="entry name" value="RuvA domain 2-like"/>
    <property type="match status" value="1"/>
</dbReference>
<dbReference type="PROSITE" id="PS50249">
    <property type="entry name" value="MPN"/>
    <property type="match status" value="1"/>
</dbReference>
<dbReference type="PROSITE" id="PS01302">
    <property type="entry name" value="UPF0758"/>
    <property type="match status" value="1"/>
</dbReference>
<accession>B0BTZ5</accession>
<evidence type="ECO:0000255" key="1">
    <source>
        <dbReference type="PROSITE-ProRule" id="PRU01182"/>
    </source>
</evidence>
<evidence type="ECO:0000305" key="2"/>
<protein>
    <recommendedName>
        <fullName>UPF0758 protein APJL_2017</fullName>
    </recommendedName>
</protein>
<reference key="1">
    <citation type="journal article" date="2008" name="PLoS ONE">
        <title>Genome biology of Actinobacillus pleuropneumoniae JL03, an isolate of serotype 3 prevalent in China.</title>
        <authorList>
            <person name="Xu Z."/>
            <person name="Zhou Y."/>
            <person name="Li L."/>
            <person name="Zhou R."/>
            <person name="Xiao S."/>
            <person name="Wan Y."/>
            <person name="Zhang S."/>
            <person name="Wang K."/>
            <person name="Li W."/>
            <person name="Li L."/>
            <person name="Jin H."/>
            <person name="Kang M."/>
            <person name="Dalai B."/>
            <person name="Li T."/>
            <person name="Liu L."/>
            <person name="Cheng Y."/>
            <person name="Zhang L."/>
            <person name="Xu T."/>
            <person name="Zheng H."/>
            <person name="Pu S."/>
            <person name="Wang B."/>
            <person name="Gu W."/>
            <person name="Zhang X.L."/>
            <person name="Zhu G.-F."/>
            <person name="Wang S."/>
            <person name="Zhao G.-P."/>
            <person name="Chen H."/>
        </authorList>
    </citation>
    <scope>NUCLEOTIDE SEQUENCE [LARGE SCALE GENOMIC DNA]</scope>
    <source>
        <strain>JL03</strain>
    </source>
</reference>
<name>Y2017_ACTPJ</name>
<organism>
    <name type="scientific">Actinobacillus pleuropneumoniae serotype 3 (strain JL03)</name>
    <dbReference type="NCBI Taxonomy" id="434271"/>
    <lineage>
        <taxon>Bacteria</taxon>
        <taxon>Pseudomonadati</taxon>
        <taxon>Pseudomonadota</taxon>
        <taxon>Gammaproteobacteria</taxon>
        <taxon>Pasteurellales</taxon>
        <taxon>Pasteurellaceae</taxon>
        <taxon>Actinobacillus</taxon>
    </lineage>
</organism>
<feature type="chain" id="PRO_1000089786" description="UPF0758 protein APJL_2017">
    <location>
        <begin position="1"/>
        <end position="220"/>
    </location>
</feature>
<feature type="domain" description="MPN" evidence="1">
    <location>
        <begin position="98"/>
        <end position="220"/>
    </location>
</feature>
<feature type="short sequence motif" description="JAMM motif" evidence="1">
    <location>
        <begin position="169"/>
        <end position="182"/>
    </location>
</feature>
<feature type="binding site" evidence="1">
    <location>
        <position position="169"/>
    </location>
    <ligand>
        <name>Zn(2+)</name>
        <dbReference type="ChEBI" id="CHEBI:29105"/>
        <note>catalytic</note>
    </ligand>
</feature>
<feature type="binding site" evidence="1">
    <location>
        <position position="171"/>
    </location>
    <ligand>
        <name>Zn(2+)</name>
        <dbReference type="ChEBI" id="CHEBI:29105"/>
        <note>catalytic</note>
    </ligand>
</feature>
<feature type="binding site" evidence="1">
    <location>
        <position position="182"/>
    </location>
    <ligand>
        <name>Zn(2+)</name>
        <dbReference type="ChEBI" id="CHEBI:29105"/>
        <note>catalytic</note>
    </ligand>
</feature>